<comment type="function">
    <text evidence="1 4">One of the extrinsic, lumenal subunits of photosystem II (PSII). PSII is a light-driven water plastoquinone oxidoreductase, using light energy to abstract electrons from H(2)O, generating a proton gradient subsequently used for ATP formation. The extrinsic proteins stabilize the structure of photosystem II oxygen-evolving complex (OEC), the ion environment of oxygen evolution and protect the OEC against heat-induced inactivation. Low-potential cytochrome c that plays a role in the OEC of PSII.</text>
</comment>
<comment type="cofactor">
    <cofactor evidence="2">
        <name>heme c</name>
        <dbReference type="ChEBI" id="CHEBI:61717"/>
    </cofactor>
    <text>Binds 1 heme c group covalently per subunit (PubMed:11478889).</text>
</comment>
<comment type="biophysicochemical properties">
    <redoxPotential>
        <text evidence="2">E(0) is -260 mV.</text>
    </redoxPotential>
</comment>
<comment type="subunit">
    <text evidence="1 2">PSII is composed of 1 copy each of membrane proteins PsbA, PsbB, PsbC, PsbD, PsbE, PsbF, PsbH, PsbI, PsbJ, PsbK, PsbL, PsbM, PsbT, PsbX, PsbY, PsbZ, Psb30/Ycf12, peripheral proteins PsbO, CyanoQ (PsbQ), PsbU, PsbV and a large number of cofactors. It forms dimeric complexes (By similarity). Homodimer in crystal structure (PubMed:11478889).</text>
</comment>
<comment type="subcellular location">
    <subcellularLocation>
        <location evidence="1">Cellular thylakoid membrane</location>
        <topology evidence="1">Peripheral membrane protein</topology>
        <orientation evidence="1">Lumenal side</orientation>
    </subcellularLocation>
    <text evidence="1">Associated with photosystem II at the lumenal side of the thylakoid membrane.</text>
</comment>
<comment type="similarity">
    <text evidence="1">Belongs to the cytochrome c family. PsbV subfamily.</text>
</comment>
<reference key="1">
    <citation type="journal article" date="2001" name="Biochemistry">
        <title>Structures of cytochrome c-549 and cytochrome c6 from the cyanobacterium Arthrospira maxima.</title>
        <authorList>
            <person name="Sawaya M.R."/>
            <person name="Krogmann D.W."/>
            <person name="Serag A."/>
            <person name="Ho K.K."/>
            <person name="Yeates T.O."/>
            <person name="Kerfeld C.A."/>
        </authorList>
    </citation>
    <scope>PROTEIN SEQUENCE</scope>
    <scope>X-RAY CRYSTALLOGRAPHY (2.3 ANGSTROMS) IN COMPLEX WITH HEME</scope>
    <scope>COFACTOR</scope>
    <scope>BIOPHYSICOCHEMICAL PROPERTIES</scope>
    <scope>SUBUNIT</scope>
</reference>
<accession>P82603</accession>
<evidence type="ECO:0000255" key="1">
    <source>
        <dbReference type="HAMAP-Rule" id="MF_01378"/>
    </source>
</evidence>
<evidence type="ECO:0000269" key="2">
    <source>
    </source>
</evidence>
<evidence type="ECO:0000303" key="3">
    <source>
    </source>
</evidence>
<evidence type="ECO:0000305" key="4"/>
<evidence type="ECO:0007829" key="5">
    <source>
        <dbReference type="PDB" id="1F1C"/>
    </source>
</evidence>
<feature type="chain" id="PRO_0000108381" description="Photosystem II extrinsic protein V">
    <location>
        <begin position="1"/>
        <end position="129"/>
    </location>
</feature>
<feature type="binding site" description="covalent" evidence="2">
    <location>
        <position position="35"/>
    </location>
    <ligand>
        <name>heme c</name>
        <dbReference type="ChEBI" id="CHEBI:61717"/>
    </ligand>
</feature>
<feature type="binding site" description="covalent" evidence="2">
    <location>
        <position position="38"/>
    </location>
    <ligand>
        <name>heme c</name>
        <dbReference type="ChEBI" id="CHEBI:61717"/>
    </ligand>
</feature>
<feature type="binding site" description="axial binding residue" evidence="2">
    <location>
        <position position="39"/>
    </location>
    <ligand>
        <name>heme c</name>
        <dbReference type="ChEBI" id="CHEBI:61717"/>
    </ligand>
    <ligandPart>
        <name>Fe</name>
        <dbReference type="ChEBI" id="CHEBI:18248"/>
    </ligandPart>
</feature>
<feature type="binding site" description="axial binding residue" evidence="2">
    <location>
        <position position="90"/>
    </location>
    <ligand>
        <name>heme c</name>
        <dbReference type="ChEBI" id="CHEBI:61717"/>
    </ligand>
    <ligandPart>
        <name>Fe</name>
        <dbReference type="ChEBI" id="CHEBI:18248"/>
    </ligandPart>
</feature>
<feature type="turn" evidence="5">
    <location>
        <begin position="3"/>
        <end position="6"/>
    </location>
</feature>
<feature type="strand" evidence="5">
    <location>
        <begin position="7"/>
        <end position="9"/>
    </location>
</feature>
<feature type="strand" evidence="5">
    <location>
        <begin position="16"/>
        <end position="18"/>
    </location>
</feature>
<feature type="helix" evidence="5">
    <location>
        <begin position="21"/>
        <end position="34"/>
    </location>
</feature>
<feature type="helix" evidence="5">
    <location>
        <begin position="36"/>
        <end position="39"/>
    </location>
</feature>
<feature type="helix" evidence="5">
    <location>
        <begin position="40"/>
        <end position="42"/>
    </location>
</feature>
<feature type="strand" evidence="5">
    <location>
        <begin position="48"/>
        <end position="50"/>
    </location>
</feature>
<feature type="helix" evidence="5">
    <location>
        <begin position="54"/>
        <end position="58"/>
    </location>
</feature>
<feature type="strand" evidence="5">
    <location>
        <begin position="60"/>
        <end position="62"/>
    </location>
</feature>
<feature type="helix" evidence="5">
    <location>
        <begin position="67"/>
        <end position="75"/>
    </location>
</feature>
<feature type="turn" evidence="5">
    <location>
        <begin position="87"/>
        <end position="89"/>
    </location>
</feature>
<feature type="turn" evidence="5">
    <location>
        <begin position="96"/>
        <end position="98"/>
    </location>
</feature>
<feature type="helix" evidence="5">
    <location>
        <begin position="100"/>
        <end position="102"/>
    </location>
</feature>
<feature type="helix" evidence="5">
    <location>
        <begin position="107"/>
        <end position="124"/>
    </location>
</feature>
<feature type="helix" evidence="5">
    <location>
        <begin position="125"/>
        <end position="127"/>
    </location>
</feature>
<dbReference type="PDB" id="1F1C">
    <property type="method" value="X-ray"/>
    <property type="resolution" value="2.30 A"/>
    <property type="chains" value="A/B=1-129"/>
</dbReference>
<dbReference type="PDBsum" id="1F1C"/>
<dbReference type="SMR" id="P82603"/>
<dbReference type="EvolutionaryTrace" id="P82603"/>
<dbReference type="GO" id="GO:0009523">
    <property type="term" value="C:photosystem II"/>
    <property type="evidence" value="ECO:0007669"/>
    <property type="project" value="UniProtKB-KW"/>
</dbReference>
<dbReference type="GO" id="GO:0031676">
    <property type="term" value="C:plasma membrane-derived thylakoid membrane"/>
    <property type="evidence" value="ECO:0007669"/>
    <property type="project" value="UniProtKB-SubCell"/>
</dbReference>
<dbReference type="GO" id="GO:0009055">
    <property type="term" value="F:electron transfer activity"/>
    <property type="evidence" value="ECO:0007669"/>
    <property type="project" value="InterPro"/>
</dbReference>
<dbReference type="GO" id="GO:0020037">
    <property type="term" value="F:heme binding"/>
    <property type="evidence" value="ECO:0007669"/>
    <property type="project" value="InterPro"/>
</dbReference>
<dbReference type="GO" id="GO:0005506">
    <property type="term" value="F:iron ion binding"/>
    <property type="evidence" value="ECO:0007669"/>
    <property type="project" value="InterPro"/>
</dbReference>
<dbReference type="GO" id="GO:0019684">
    <property type="term" value="P:photosynthesis, light reaction"/>
    <property type="evidence" value="ECO:0007669"/>
    <property type="project" value="UniProtKB-UniRule"/>
</dbReference>
<dbReference type="GO" id="GO:0022904">
    <property type="term" value="P:respiratory electron transport chain"/>
    <property type="evidence" value="ECO:0007669"/>
    <property type="project" value="InterPro"/>
</dbReference>
<dbReference type="Gene3D" id="1.10.760.10">
    <property type="entry name" value="Cytochrome c-like domain"/>
    <property type="match status" value="1"/>
</dbReference>
<dbReference type="HAMAP" id="MF_01378">
    <property type="entry name" value="PSII_Cyt550"/>
    <property type="match status" value="1"/>
</dbReference>
<dbReference type="InterPro" id="IPR009056">
    <property type="entry name" value="Cyt_c-like_dom"/>
</dbReference>
<dbReference type="InterPro" id="IPR036909">
    <property type="entry name" value="Cyt_c-like_dom_sf"/>
</dbReference>
<dbReference type="InterPro" id="IPR029490">
    <property type="entry name" value="Cytochrom_C550"/>
</dbReference>
<dbReference type="InterPro" id="IPR017851">
    <property type="entry name" value="PsbV_cyt_c550"/>
</dbReference>
<dbReference type="InterPro" id="IPR016003">
    <property type="entry name" value="PsbV_cyt_c550-like"/>
</dbReference>
<dbReference type="NCBIfam" id="TIGR03045">
    <property type="entry name" value="PS_II_C550"/>
    <property type="match status" value="1"/>
</dbReference>
<dbReference type="Pfam" id="PF14495">
    <property type="entry name" value="Cytochrom_C550"/>
    <property type="match status" value="1"/>
</dbReference>
<dbReference type="PIRSF" id="PIRSF005890">
    <property type="entry name" value="Phot_II_cyt_c550"/>
    <property type="match status" value="1"/>
</dbReference>
<dbReference type="SUPFAM" id="SSF46626">
    <property type="entry name" value="Cytochrome c"/>
    <property type="match status" value="1"/>
</dbReference>
<dbReference type="PROSITE" id="PS51007">
    <property type="entry name" value="CYTC"/>
    <property type="match status" value="1"/>
</dbReference>
<organism>
    <name type="scientific">Limnospira maxima</name>
    <name type="common">Arthrospira maxima</name>
    <dbReference type="NCBI Taxonomy" id="129910"/>
    <lineage>
        <taxon>Bacteria</taxon>
        <taxon>Bacillati</taxon>
        <taxon>Cyanobacteriota</taxon>
        <taxon>Cyanophyceae</taxon>
        <taxon>Oscillatoriophycideae</taxon>
        <taxon>Oscillatoriales</taxon>
        <taxon>Sirenicapillariaceae</taxon>
        <taxon>Limnospira</taxon>
    </lineage>
</organism>
<sequence length="129" mass="14198">LTEELRTFPINAQGDTAVLSLKEIKKGQQVFNAACAQCHALGVTRTNPDVNLSPEALALATPPRDNIAALVDYIKNPTTYDGFVEISELHPSLKSSDIFPKMRNISEDDLYNVAGYILLQPKVRGEQWG</sequence>
<name>CY550_LIMMA</name>
<protein>
    <recommendedName>
        <fullName evidence="1">Photosystem II extrinsic protein V</fullName>
        <shortName evidence="1">PsbV</shortName>
    </recommendedName>
    <alternativeName>
        <fullName evidence="3">Cytochrome c-549</fullName>
    </alternativeName>
    <alternativeName>
        <fullName evidence="1">Cytochrome c-550</fullName>
    </alternativeName>
    <alternativeName>
        <fullName>Cytochrome c549</fullName>
    </alternativeName>
    <alternativeName>
        <fullName evidence="1">Cytochrome c550</fullName>
    </alternativeName>
    <alternativeName>
        <fullName evidence="1">Low-potential cytochrome c</fullName>
    </alternativeName>
</protein>
<gene>
    <name evidence="1" type="primary">psbV</name>
</gene>
<keyword id="KW-0002">3D-structure</keyword>
<keyword id="KW-0903">Direct protein sequencing</keyword>
<keyword id="KW-0249">Electron transport</keyword>
<keyword id="KW-0349">Heme</keyword>
<keyword id="KW-0408">Iron</keyword>
<keyword id="KW-0472">Membrane</keyword>
<keyword id="KW-0479">Metal-binding</keyword>
<keyword id="KW-0602">Photosynthesis</keyword>
<keyword id="KW-0604">Photosystem II</keyword>
<keyword id="KW-0793">Thylakoid</keyword>
<keyword id="KW-0813">Transport</keyword>
<proteinExistence type="evidence at protein level"/>